<sequence length="29" mass="3481">MTKNKFVLLRYLCLFCTNIDQIDFNSVLK</sequence>
<name>YCX4_TRICV</name>
<organism>
    <name type="scientific">Trieres chinensis</name>
    <name type="common">Marine centric diatom</name>
    <name type="synonym">Odontella sinensis</name>
    <dbReference type="NCBI Taxonomy" id="1514140"/>
    <lineage>
        <taxon>Eukaryota</taxon>
        <taxon>Sar</taxon>
        <taxon>Stramenopiles</taxon>
        <taxon>Ochrophyta</taxon>
        <taxon>Bacillariophyta</taxon>
        <taxon>Mediophyceae</taxon>
        <taxon>Biddulphiophycidae</taxon>
        <taxon>Eupodiscales</taxon>
        <taxon>Parodontellaceae</taxon>
        <taxon>Trieres</taxon>
    </lineage>
</organism>
<proteinExistence type="predicted"/>
<feature type="chain" id="PRO_0000217456" description="Uncharacterized 3.5 kDa protein in ycf33-trnY intergenic region">
    <location>
        <begin position="1"/>
        <end position="29"/>
    </location>
</feature>
<geneLocation type="chloroplast"/>
<comment type="subcellular location">
    <subcellularLocation>
        <location>Plastid</location>
        <location>Chloroplast</location>
    </subcellularLocation>
</comment>
<protein>
    <recommendedName>
        <fullName>Uncharacterized 3.5 kDa protein in ycf33-trnY intergenic region</fullName>
    </recommendedName>
    <alternativeName>
        <fullName>ORF29A</fullName>
    </alternativeName>
</protein>
<accession>P49830</accession>
<reference key="1">
    <citation type="journal article" date="1995" name="Plant Mol. Biol. Rep.">
        <title>The chloroplast genome of a chlorophyll a+c-containing alga, Odontella sinensis.</title>
        <authorList>
            <person name="Kowallik K.V."/>
            <person name="Stoebe B."/>
            <person name="Schaffran I."/>
            <person name="Kroth-Pancic P."/>
            <person name="Freier U."/>
        </authorList>
    </citation>
    <scope>NUCLEOTIDE SEQUENCE [LARGE SCALE GENOMIC DNA]</scope>
</reference>
<keyword id="KW-0150">Chloroplast</keyword>
<keyword id="KW-0934">Plastid</keyword>
<dbReference type="EMBL" id="Z67753">
    <property type="protein sequence ID" value="CAA91683.1"/>
    <property type="molecule type" value="Genomic_DNA"/>
</dbReference>
<dbReference type="PIR" id="S78310">
    <property type="entry name" value="S78310"/>
</dbReference>
<dbReference type="RefSeq" id="NP_043651.1">
    <property type="nucleotide sequence ID" value="NC_001713.1"/>
</dbReference>
<dbReference type="GeneID" id="1457290"/>
<dbReference type="GO" id="GO:0009507">
    <property type="term" value="C:chloroplast"/>
    <property type="evidence" value="ECO:0007669"/>
    <property type="project" value="UniProtKB-SubCell"/>
</dbReference>